<feature type="chain" id="PRO_1000073232" description="Large ribosomal subunit protein uL2">
    <location>
        <begin position="1"/>
        <end position="278"/>
    </location>
</feature>
<feature type="region of interest" description="Disordered" evidence="2">
    <location>
        <begin position="225"/>
        <end position="278"/>
    </location>
</feature>
<feature type="compositionally biased region" description="Basic residues" evidence="2">
    <location>
        <begin position="269"/>
        <end position="278"/>
    </location>
</feature>
<accession>A7HWR4</accession>
<keyword id="KW-1185">Reference proteome</keyword>
<keyword id="KW-0687">Ribonucleoprotein</keyword>
<keyword id="KW-0689">Ribosomal protein</keyword>
<keyword id="KW-0694">RNA-binding</keyword>
<keyword id="KW-0699">rRNA-binding</keyword>
<dbReference type="EMBL" id="CP000774">
    <property type="protein sequence ID" value="ABS64347.1"/>
    <property type="molecule type" value="Genomic_DNA"/>
</dbReference>
<dbReference type="RefSeq" id="WP_012111661.1">
    <property type="nucleotide sequence ID" value="NC_009719.1"/>
</dbReference>
<dbReference type="SMR" id="A7HWR4"/>
<dbReference type="STRING" id="402881.Plav_2739"/>
<dbReference type="KEGG" id="pla:Plav_2739"/>
<dbReference type="eggNOG" id="COG0090">
    <property type="taxonomic scope" value="Bacteria"/>
</dbReference>
<dbReference type="HOGENOM" id="CLU_036235_2_1_5"/>
<dbReference type="OrthoDB" id="9778722at2"/>
<dbReference type="Proteomes" id="UP000006377">
    <property type="component" value="Chromosome"/>
</dbReference>
<dbReference type="GO" id="GO:0015934">
    <property type="term" value="C:large ribosomal subunit"/>
    <property type="evidence" value="ECO:0007669"/>
    <property type="project" value="InterPro"/>
</dbReference>
<dbReference type="GO" id="GO:0019843">
    <property type="term" value="F:rRNA binding"/>
    <property type="evidence" value="ECO:0007669"/>
    <property type="project" value="UniProtKB-UniRule"/>
</dbReference>
<dbReference type="GO" id="GO:0003735">
    <property type="term" value="F:structural constituent of ribosome"/>
    <property type="evidence" value="ECO:0007669"/>
    <property type="project" value="InterPro"/>
</dbReference>
<dbReference type="GO" id="GO:0016740">
    <property type="term" value="F:transferase activity"/>
    <property type="evidence" value="ECO:0007669"/>
    <property type="project" value="InterPro"/>
</dbReference>
<dbReference type="GO" id="GO:0002181">
    <property type="term" value="P:cytoplasmic translation"/>
    <property type="evidence" value="ECO:0007669"/>
    <property type="project" value="TreeGrafter"/>
</dbReference>
<dbReference type="FunFam" id="2.30.30.30:FF:000001">
    <property type="entry name" value="50S ribosomal protein L2"/>
    <property type="match status" value="1"/>
</dbReference>
<dbReference type="FunFam" id="2.40.50.140:FF:000003">
    <property type="entry name" value="50S ribosomal protein L2"/>
    <property type="match status" value="1"/>
</dbReference>
<dbReference type="FunFam" id="4.10.950.10:FF:000001">
    <property type="entry name" value="50S ribosomal protein L2"/>
    <property type="match status" value="1"/>
</dbReference>
<dbReference type="Gene3D" id="2.30.30.30">
    <property type="match status" value="1"/>
</dbReference>
<dbReference type="Gene3D" id="2.40.50.140">
    <property type="entry name" value="Nucleic acid-binding proteins"/>
    <property type="match status" value="1"/>
</dbReference>
<dbReference type="Gene3D" id="4.10.950.10">
    <property type="entry name" value="Ribosomal protein L2, domain 3"/>
    <property type="match status" value="1"/>
</dbReference>
<dbReference type="HAMAP" id="MF_01320_B">
    <property type="entry name" value="Ribosomal_uL2_B"/>
    <property type="match status" value="1"/>
</dbReference>
<dbReference type="InterPro" id="IPR012340">
    <property type="entry name" value="NA-bd_OB-fold"/>
</dbReference>
<dbReference type="InterPro" id="IPR014722">
    <property type="entry name" value="Rib_uL2_dom2"/>
</dbReference>
<dbReference type="InterPro" id="IPR002171">
    <property type="entry name" value="Ribosomal_uL2"/>
</dbReference>
<dbReference type="InterPro" id="IPR005880">
    <property type="entry name" value="Ribosomal_uL2_bac/org-type"/>
</dbReference>
<dbReference type="InterPro" id="IPR022669">
    <property type="entry name" value="Ribosomal_uL2_C"/>
</dbReference>
<dbReference type="InterPro" id="IPR022671">
    <property type="entry name" value="Ribosomal_uL2_CS"/>
</dbReference>
<dbReference type="InterPro" id="IPR014726">
    <property type="entry name" value="Ribosomal_uL2_dom3"/>
</dbReference>
<dbReference type="InterPro" id="IPR022666">
    <property type="entry name" value="Ribosomal_uL2_RNA-bd_dom"/>
</dbReference>
<dbReference type="InterPro" id="IPR008991">
    <property type="entry name" value="Translation_prot_SH3-like_sf"/>
</dbReference>
<dbReference type="NCBIfam" id="TIGR01171">
    <property type="entry name" value="rplB_bact"/>
    <property type="match status" value="1"/>
</dbReference>
<dbReference type="PANTHER" id="PTHR13691:SF5">
    <property type="entry name" value="LARGE RIBOSOMAL SUBUNIT PROTEIN UL2M"/>
    <property type="match status" value="1"/>
</dbReference>
<dbReference type="PANTHER" id="PTHR13691">
    <property type="entry name" value="RIBOSOMAL PROTEIN L2"/>
    <property type="match status" value="1"/>
</dbReference>
<dbReference type="Pfam" id="PF00181">
    <property type="entry name" value="Ribosomal_L2"/>
    <property type="match status" value="1"/>
</dbReference>
<dbReference type="Pfam" id="PF03947">
    <property type="entry name" value="Ribosomal_L2_C"/>
    <property type="match status" value="1"/>
</dbReference>
<dbReference type="PIRSF" id="PIRSF002158">
    <property type="entry name" value="Ribosomal_L2"/>
    <property type="match status" value="1"/>
</dbReference>
<dbReference type="SMART" id="SM01383">
    <property type="entry name" value="Ribosomal_L2"/>
    <property type="match status" value="1"/>
</dbReference>
<dbReference type="SMART" id="SM01382">
    <property type="entry name" value="Ribosomal_L2_C"/>
    <property type="match status" value="1"/>
</dbReference>
<dbReference type="SUPFAM" id="SSF50249">
    <property type="entry name" value="Nucleic acid-binding proteins"/>
    <property type="match status" value="1"/>
</dbReference>
<dbReference type="SUPFAM" id="SSF50104">
    <property type="entry name" value="Translation proteins SH3-like domain"/>
    <property type="match status" value="1"/>
</dbReference>
<dbReference type="PROSITE" id="PS00467">
    <property type="entry name" value="RIBOSOMAL_L2"/>
    <property type="match status" value="1"/>
</dbReference>
<proteinExistence type="inferred from homology"/>
<evidence type="ECO:0000255" key="1">
    <source>
        <dbReference type="HAMAP-Rule" id="MF_01320"/>
    </source>
</evidence>
<evidence type="ECO:0000256" key="2">
    <source>
        <dbReference type="SAM" id="MobiDB-lite"/>
    </source>
</evidence>
<evidence type="ECO:0000305" key="3"/>
<name>RL2_PARL1</name>
<protein>
    <recommendedName>
        <fullName evidence="1">Large ribosomal subunit protein uL2</fullName>
    </recommendedName>
    <alternativeName>
        <fullName evidence="3">50S ribosomal protein L2</fullName>
    </alternativeName>
</protein>
<comment type="function">
    <text evidence="1">One of the primary rRNA binding proteins. Required for association of the 30S and 50S subunits to form the 70S ribosome, for tRNA binding and peptide bond formation. It has been suggested to have peptidyltransferase activity; this is somewhat controversial. Makes several contacts with the 16S rRNA in the 70S ribosome.</text>
</comment>
<comment type="subunit">
    <text evidence="1">Part of the 50S ribosomal subunit. Forms a bridge to the 30S subunit in the 70S ribosome.</text>
</comment>
<comment type="similarity">
    <text evidence="1">Belongs to the universal ribosomal protein uL2 family.</text>
</comment>
<gene>
    <name evidence="1" type="primary">rplB</name>
    <name type="ordered locus">Plav_2739</name>
</gene>
<reference key="1">
    <citation type="journal article" date="2011" name="Stand. Genomic Sci.">
        <title>Complete genome sequence of Parvibaculum lavamentivorans type strain (DS-1(T)).</title>
        <authorList>
            <person name="Schleheck D."/>
            <person name="Weiss M."/>
            <person name="Pitluck S."/>
            <person name="Bruce D."/>
            <person name="Land M.L."/>
            <person name="Han S."/>
            <person name="Saunders E."/>
            <person name="Tapia R."/>
            <person name="Detter C."/>
            <person name="Brettin T."/>
            <person name="Han J."/>
            <person name="Woyke T."/>
            <person name="Goodwin L."/>
            <person name="Pennacchio L."/>
            <person name="Nolan M."/>
            <person name="Cook A.M."/>
            <person name="Kjelleberg S."/>
            <person name="Thomas T."/>
        </authorList>
    </citation>
    <scope>NUCLEOTIDE SEQUENCE [LARGE SCALE GENOMIC DNA]</scope>
    <source>
        <strain>DS-1 / DSM 13023 / NCIMB 13966</strain>
    </source>
</reference>
<organism>
    <name type="scientific">Parvibaculum lavamentivorans (strain DS-1 / DSM 13023 / NCIMB 13966)</name>
    <dbReference type="NCBI Taxonomy" id="402881"/>
    <lineage>
        <taxon>Bacteria</taxon>
        <taxon>Pseudomonadati</taxon>
        <taxon>Pseudomonadota</taxon>
        <taxon>Alphaproteobacteria</taxon>
        <taxon>Hyphomicrobiales</taxon>
        <taxon>Parvibaculaceae</taxon>
        <taxon>Parvibaculum</taxon>
    </lineage>
</organism>
<sequence length="278" mass="30422">MALKKYKPTSPAQRGLVLVDRSALYKGKPVKDLTEGLTKSGGRNNHGRITVRFRGGGHKRSYRTVDFKRRRYDVPATVERLEYDPNRTAFIALVKYEDGELAYILAPQRLQPGDVVISGSRVDVKPGNAMPLANIPVGTIVHNVEMKPGKGGQIARSAGTYVQLVGRDQGYALLRLSSGEQRMVPATCMASIGAVSNPDHSNITIAKAGRNRWLGKRPHVRGVVMNPVDHPHGGGEGRTSGGRHPVTPWGKPTKGKKTRANKATDKYIVRSRHQKKKG</sequence>